<organism>
    <name type="scientific">Homo sapiens</name>
    <name type="common">Human</name>
    <dbReference type="NCBI Taxonomy" id="9606"/>
    <lineage>
        <taxon>Eukaryota</taxon>
        <taxon>Metazoa</taxon>
        <taxon>Chordata</taxon>
        <taxon>Craniata</taxon>
        <taxon>Vertebrata</taxon>
        <taxon>Euteleostomi</taxon>
        <taxon>Mammalia</taxon>
        <taxon>Eutheria</taxon>
        <taxon>Euarchontoglires</taxon>
        <taxon>Primates</taxon>
        <taxon>Haplorrhini</taxon>
        <taxon>Catarrhini</taxon>
        <taxon>Hominidae</taxon>
        <taxon>Homo</taxon>
    </lineage>
</organism>
<protein>
    <recommendedName>
        <fullName>Gamma-glutamylaminecyclotransferase</fullName>
        <shortName>GGACT</shortName>
        <ecNumber evidence="2">4.3.2.8</ecNumber>
    </recommendedName>
    <alternativeName>
        <fullName>AIG2-like domain-containing protein 1</fullName>
    </alternativeName>
    <alternativeName>
        <fullName>Gamma-glutamylamine cyclotransferase</fullName>
    </alternativeName>
</protein>
<gene>
    <name type="primary">GGACT</name>
    <name type="synonym">A2LD1</name>
</gene>
<comment type="function">
    <text evidence="2">Contributes to degradation of proteins cross-linked by transglutaminases by degrading the cross-link between a lysine and a glutamic acid residue. Catalyzes the formation of 5-oxo-L-proline from L-gamma-glutamyl-L-epsilon-lysine. Inactive with L-gamma-glutamyl-alpha-amino acid substrates such as L-gamma-glutamyl-L-alpha-cysteine and L-gamma-glutamyl-L-alpha-alanine.</text>
</comment>
<comment type="catalytic activity">
    <reaction evidence="2">
        <text>epsilon-(gamma-L-glutamyl)-L-lysine = 5-oxo-L-proline + L-lysine</text>
        <dbReference type="Rhea" id="RHEA:16961"/>
        <dbReference type="ChEBI" id="CHEBI:32551"/>
        <dbReference type="ChEBI" id="CHEBI:58402"/>
        <dbReference type="ChEBI" id="CHEBI:133752"/>
        <dbReference type="EC" id="4.3.2.8"/>
    </reaction>
</comment>
<comment type="subunit">
    <text evidence="2">Monomer.</text>
</comment>
<comment type="interaction">
    <interactant intactId="EBI-10299852">
        <id>Q9BVM4</id>
    </interactant>
    <interactant intactId="EBI-2865580">
        <id>O43679</id>
        <label>LDB2</label>
    </interactant>
    <organismsDiffer>false</organismsDiffer>
    <experiments>3</experiments>
</comment>
<comment type="interaction">
    <interactant intactId="EBI-10299852">
        <id>Q9BVM4</id>
    </interactant>
    <interactant intactId="EBI-10290304">
        <id>Q96KN8-3</id>
        <label>PLAAT5</label>
    </interactant>
    <organismsDiffer>false</organismsDiffer>
    <experiments>8</experiments>
</comment>
<comment type="interaction">
    <interactant intactId="EBI-10299852">
        <id>Q9BVM4</id>
    </interactant>
    <interactant intactId="EBI-740037">
        <id>O96006</id>
        <label>ZBED1</label>
    </interactant>
    <organismsDiffer>false</organismsDiffer>
    <experiments>3</experiments>
</comment>
<comment type="similarity">
    <text evidence="3">Belongs to the gamma-glutamylcyclotransferase family.</text>
</comment>
<comment type="sequence caution" evidence="3">
    <conflict type="erroneous initiation">
        <sequence resource="EMBL-CDS" id="AAH04360"/>
    </conflict>
    <text>Extended N-terminus.</text>
</comment>
<sequence length="153" mass="17329">MALVFVYGTLKRGQPNHRVLRDGAHGSAAFRARGRTLEPYPLVIAGEHNIPWLLHLPGSGRLVEGEVYAVDERMLRFLDDFESCPALYQRTVLRVQLLEDRAPGAEEPPAPTAVQCFVYSRATFPPEWAQLPHHDSYDSEGPHGLRYNPRENR</sequence>
<reference key="1">
    <citation type="journal article" date="2004" name="Nat. Genet.">
        <title>Complete sequencing and characterization of 21,243 full-length human cDNAs.</title>
        <authorList>
            <person name="Ota T."/>
            <person name="Suzuki Y."/>
            <person name="Nishikawa T."/>
            <person name="Otsuki T."/>
            <person name="Sugiyama T."/>
            <person name="Irie R."/>
            <person name="Wakamatsu A."/>
            <person name="Hayashi K."/>
            <person name="Sato H."/>
            <person name="Nagai K."/>
            <person name="Kimura K."/>
            <person name="Makita H."/>
            <person name="Sekine M."/>
            <person name="Obayashi M."/>
            <person name="Nishi T."/>
            <person name="Shibahara T."/>
            <person name="Tanaka T."/>
            <person name="Ishii S."/>
            <person name="Yamamoto J."/>
            <person name="Saito K."/>
            <person name="Kawai Y."/>
            <person name="Isono Y."/>
            <person name="Nakamura Y."/>
            <person name="Nagahari K."/>
            <person name="Murakami K."/>
            <person name="Yasuda T."/>
            <person name="Iwayanagi T."/>
            <person name="Wagatsuma M."/>
            <person name="Shiratori A."/>
            <person name="Sudo H."/>
            <person name="Hosoiri T."/>
            <person name="Kaku Y."/>
            <person name="Kodaira H."/>
            <person name="Kondo H."/>
            <person name="Sugawara M."/>
            <person name="Takahashi M."/>
            <person name="Kanda K."/>
            <person name="Yokoi T."/>
            <person name="Furuya T."/>
            <person name="Kikkawa E."/>
            <person name="Omura Y."/>
            <person name="Abe K."/>
            <person name="Kamihara K."/>
            <person name="Katsuta N."/>
            <person name="Sato K."/>
            <person name="Tanikawa M."/>
            <person name="Yamazaki M."/>
            <person name="Ninomiya K."/>
            <person name="Ishibashi T."/>
            <person name="Yamashita H."/>
            <person name="Murakawa K."/>
            <person name="Fujimori K."/>
            <person name="Tanai H."/>
            <person name="Kimata M."/>
            <person name="Watanabe M."/>
            <person name="Hiraoka S."/>
            <person name="Chiba Y."/>
            <person name="Ishida S."/>
            <person name="Ono Y."/>
            <person name="Takiguchi S."/>
            <person name="Watanabe S."/>
            <person name="Yosida M."/>
            <person name="Hotuta T."/>
            <person name="Kusano J."/>
            <person name="Kanehori K."/>
            <person name="Takahashi-Fujii A."/>
            <person name="Hara H."/>
            <person name="Tanase T.-O."/>
            <person name="Nomura Y."/>
            <person name="Togiya S."/>
            <person name="Komai F."/>
            <person name="Hara R."/>
            <person name="Takeuchi K."/>
            <person name="Arita M."/>
            <person name="Imose N."/>
            <person name="Musashino K."/>
            <person name="Yuuki H."/>
            <person name="Oshima A."/>
            <person name="Sasaki N."/>
            <person name="Aotsuka S."/>
            <person name="Yoshikawa Y."/>
            <person name="Matsunawa H."/>
            <person name="Ichihara T."/>
            <person name="Shiohata N."/>
            <person name="Sano S."/>
            <person name="Moriya S."/>
            <person name="Momiyama H."/>
            <person name="Satoh N."/>
            <person name="Takami S."/>
            <person name="Terashima Y."/>
            <person name="Suzuki O."/>
            <person name="Nakagawa S."/>
            <person name="Senoh A."/>
            <person name="Mizoguchi H."/>
            <person name="Goto Y."/>
            <person name="Shimizu F."/>
            <person name="Wakebe H."/>
            <person name="Hishigaki H."/>
            <person name="Watanabe T."/>
            <person name="Sugiyama A."/>
            <person name="Takemoto M."/>
            <person name="Kawakami B."/>
            <person name="Yamazaki M."/>
            <person name="Watanabe K."/>
            <person name="Kumagai A."/>
            <person name="Itakura S."/>
            <person name="Fukuzumi Y."/>
            <person name="Fujimori Y."/>
            <person name="Komiyama M."/>
            <person name="Tashiro H."/>
            <person name="Tanigami A."/>
            <person name="Fujiwara T."/>
            <person name="Ono T."/>
            <person name="Yamada K."/>
            <person name="Fujii Y."/>
            <person name="Ozaki K."/>
            <person name="Hirao M."/>
            <person name="Ohmori Y."/>
            <person name="Kawabata A."/>
            <person name="Hikiji T."/>
            <person name="Kobatake N."/>
            <person name="Inagaki H."/>
            <person name="Ikema Y."/>
            <person name="Okamoto S."/>
            <person name="Okitani R."/>
            <person name="Kawakami T."/>
            <person name="Noguchi S."/>
            <person name="Itoh T."/>
            <person name="Shigeta K."/>
            <person name="Senba T."/>
            <person name="Matsumura K."/>
            <person name="Nakajima Y."/>
            <person name="Mizuno T."/>
            <person name="Morinaga M."/>
            <person name="Sasaki M."/>
            <person name="Togashi T."/>
            <person name="Oyama M."/>
            <person name="Hata H."/>
            <person name="Watanabe M."/>
            <person name="Komatsu T."/>
            <person name="Mizushima-Sugano J."/>
            <person name="Satoh T."/>
            <person name="Shirai Y."/>
            <person name="Takahashi Y."/>
            <person name="Nakagawa K."/>
            <person name="Okumura K."/>
            <person name="Nagase T."/>
            <person name="Nomura N."/>
            <person name="Kikuchi H."/>
            <person name="Masuho Y."/>
            <person name="Yamashita R."/>
            <person name="Nakai K."/>
            <person name="Yada T."/>
            <person name="Nakamura Y."/>
            <person name="Ohara O."/>
            <person name="Isogai T."/>
            <person name="Sugano S."/>
        </authorList>
    </citation>
    <scope>NUCLEOTIDE SEQUENCE [LARGE SCALE MRNA]</scope>
</reference>
<reference key="2">
    <citation type="journal article" date="2004" name="Nature">
        <title>The DNA sequence and analysis of human chromosome 13.</title>
        <authorList>
            <person name="Dunham A."/>
            <person name="Matthews L.H."/>
            <person name="Burton J."/>
            <person name="Ashurst J.L."/>
            <person name="Howe K.L."/>
            <person name="Ashcroft K.J."/>
            <person name="Beare D.M."/>
            <person name="Burford D.C."/>
            <person name="Hunt S.E."/>
            <person name="Griffiths-Jones S."/>
            <person name="Jones M.C."/>
            <person name="Keenan S.J."/>
            <person name="Oliver K."/>
            <person name="Scott C.E."/>
            <person name="Ainscough R."/>
            <person name="Almeida J.P."/>
            <person name="Ambrose K.D."/>
            <person name="Andrews D.T."/>
            <person name="Ashwell R.I.S."/>
            <person name="Babbage A.K."/>
            <person name="Bagguley C.L."/>
            <person name="Bailey J."/>
            <person name="Bannerjee R."/>
            <person name="Barlow K.F."/>
            <person name="Bates K."/>
            <person name="Beasley H."/>
            <person name="Bird C.P."/>
            <person name="Bray-Allen S."/>
            <person name="Brown A.J."/>
            <person name="Brown J.Y."/>
            <person name="Burrill W."/>
            <person name="Carder C."/>
            <person name="Carter N.P."/>
            <person name="Chapman J.C."/>
            <person name="Clamp M.E."/>
            <person name="Clark S.Y."/>
            <person name="Clarke G."/>
            <person name="Clee C.M."/>
            <person name="Clegg S.C."/>
            <person name="Cobley V."/>
            <person name="Collins J.E."/>
            <person name="Corby N."/>
            <person name="Coville G.J."/>
            <person name="Deloukas P."/>
            <person name="Dhami P."/>
            <person name="Dunham I."/>
            <person name="Dunn M."/>
            <person name="Earthrowl M.E."/>
            <person name="Ellington A.G."/>
            <person name="Faulkner L."/>
            <person name="Frankish A.G."/>
            <person name="Frankland J."/>
            <person name="French L."/>
            <person name="Garner P."/>
            <person name="Garnett J."/>
            <person name="Gilbert J.G.R."/>
            <person name="Gilson C.J."/>
            <person name="Ghori J."/>
            <person name="Grafham D.V."/>
            <person name="Gribble S.M."/>
            <person name="Griffiths C."/>
            <person name="Hall R.E."/>
            <person name="Hammond S."/>
            <person name="Harley J.L."/>
            <person name="Hart E.A."/>
            <person name="Heath P.D."/>
            <person name="Howden P.J."/>
            <person name="Huckle E.J."/>
            <person name="Hunt P.J."/>
            <person name="Hunt A.R."/>
            <person name="Johnson C."/>
            <person name="Johnson D."/>
            <person name="Kay M."/>
            <person name="Kimberley A.M."/>
            <person name="King A."/>
            <person name="Laird G.K."/>
            <person name="Langford C.J."/>
            <person name="Lawlor S."/>
            <person name="Leongamornlert D.A."/>
            <person name="Lloyd D.M."/>
            <person name="Lloyd C."/>
            <person name="Loveland J.E."/>
            <person name="Lovell J."/>
            <person name="Martin S."/>
            <person name="Mashreghi-Mohammadi M."/>
            <person name="McLaren S.J."/>
            <person name="McMurray A."/>
            <person name="Milne S."/>
            <person name="Moore M.J.F."/>
            <person name="Nickerson T."/>
            <person name="Palmer S.A."/>
            <person name="Pearce A.V."/>
            <person name="Peck A.I."/>
            <person name="Pelan S."/>
            <person name="Phillimore B."/>
            <person name="Porter K.M."/>
            <person name="Rice C.M."/>
            <person name="Searle S."/>
            <person name="Sehra H.K."/>
            <person name="Shownkeen R."/>
            <person name="Skuce C.D."/>
            <person name="Smith M."/>
            <person name="Steward C.A."/>
            <person name="Sycamore N."/>
            <person name="Tester J."/>
            <person name="Thomas D.W."/>
            <person name="Tracey A."/>
            <person name="Tromans A."/>
            <person name="Tubby B."/>
            <person name="Wall M."/>
            <person name="Wallis J.M."/>
            <person name="West A.P."/>
            <person name="Whitehead S.L."/>
            <person name="Willey D.L."/>
            <person name="Wilming L."/>
            <person name="Wray P.W."/>
            <person name="Wright M.W."/>
            <person name="Young L."/>
            <person name="Coulson A."/>
            <person name="Durbin R.M."/>
            <person name="Hubbard T."/>
            <person name="Sulston J.E."/>
            <person name="Beck S."/>
            <person name="Bentley D.R."/>
            <person name="Rogers J."/>
            <person name="Ross M.T."/>
        </authorList>
    </citation>
    <scope>NUCLEOTIDE SEQUENCE [LARGE SCALE GENOMIC DNA]</scope>
</reference>
<reference key="3">
    <citation type="submission" date="2005-07" db="EMBL/GenBank/DDBJ databases">
        <authorList>
            <person name="Mural R.J."/>
            <person name="Istrail S."/>
            <person name="Sutton G.G."/>
            <person name="Florea L."/>
            <person name="Halpern A.L."/>
            <person name="Mobarry C.M."/>
            <person name="Lippert R."/>
            <person name="Walenz B."/>
            <person name="Shatkay H."/>
            <person name="Dew I."/>
            <person name="Miller J.R."/>
            <person name="Flanigan M.J."/>
            <person name="Edwards N.J."/>
            <person name="Bolanos R."/>
            <person name="Fasulo D."/>
            <person name="Halldorsson B.V."/>
            <person name="Hannenhalli S."/>
            <person name="Turner R."/>
            <person name="Yooseph S."/>
            <person name="Lu F."/>
            <person name="Nusskern D.R."/>
            <person name="Shue B.C."/>
            <person name="Zheng X.H."/>
            <person name="Zhong F."/>
            <person name="Delcher A.L."/>
            <person name="Huson D.H."/>
            <person name="Kravitz S.A."/>
            <person name="Mouchard L."/>
            <person name="Reinert K."/>
            <person name="Remington K.A."/>
            <person name="Clark A.G."/>
            <person name="Waterman M.S."/>
            <person name="Eichler E.E."/>
            <person name="Adams M.D."/>
            <person name="Hunkapiller M.W."/>
            <person name="Myers E.W."/>
            <person name="Venter J.C."/>
        </authorList>
    </citation>
    <scope>NUCLEOTIDE SEQUENCE [LARGE SCALE GENOMIC DNA]</scope>
</reference>
<reference key="4">
    <citation type="journal article" date="2004" name="Genome Res.">
        <title>The status, quality, and expansion of the NIH full-length cDNA project: the Mammalian Gene Collection (MGC).</title>
        <authorList>
            <consortium name="The MGC Project Team"/>
        </authorList>
    </citation>
    <scope>NUCLEOTIDE SEQUENCE [LARGE SCALE MRNA]</scope>
    <source>
        <tissue>Lung</tissue>
    </source>
</reference>
<reference key="5">
    <citation type="journal article" date="2010" name="J. Biol. Chem.">
        <title>Identification and characterization of gamma-glutamylamine cyclotransferase, an enzyme responsible for gamma-glutamyl-epsilon-lysine catabolism.</title>
        <authorList>
            <person name="Oakley A.J."/>
            <person name="Coggan M."/>
            <person name="Board P.G."/>
        </authorList>
    </citation>
    <scope>X-RAY CRYSTALLOGRAPHY (0.98 ANGSTROMS) IN COMPLEX WITH 5-OXOPROLINE AND NITRATE</scope>
    <scope>FUNCTION</scope>
    <scope>CATALYTIC ACTIVITY</scope>
    <scope>SUBUNIT</scope>
    <scope>ACTIVE SITE</scope>
    <scope>MUTAGENESIS OF GLU-82</scope>
</reference>
<accession>Q9BVM4</accession>
<accession>B3KTN1</accession>
<accession>Q9BT41</accession>
<dbReference type="EC" id="4.3.2.8" evidence="2"/>
<dbReference type="EMBL" id="AK095850">
    <property type="protein sequence ID" value="BAG53143.1"/>
    <property type="molecule type" value="mRNA"/>
</dbReference>
<dbReference type="EMBL" id="AL136526">
    <property type="status" value="NOT_ANNOTATED_CDS"/>
    <property type="molecule type" value="Genomic_DNA"/>
</dbReference>
<dbReference type="EMBL" id="CH471085">
    <property type="protein sequence ID" value="EAX09037.1"/>
    <property type="molecule type" value="Genomic_DNA"/>
</dbReference>
<dbReference type="EMBL" id="BC001077">
    <property type="protein sequence ID" value="AAH01077.2"/>
    <property type="molecule type" value="mRNA"/>
</dbReference>
<dbReference type="EMBL" id="BC004360">
    <property type="protein sequence ID" value="AAH04360.1"/>
    <property type="status" value="ALT_INIT"/>
    <property type="molecule type" value="mRNA"/>
</dbReference>
<dbReference type="CCDS" id="CCDS45066.1"/>
<dbReference type="RefSeq" id="NP_001182016.1">
    <property type="nucleotide sequence ID" value="NM_001195087.2"/>
</dbReference>
<dbReference type="RefSeq" id="NP_149101.1">
    <property type="nucleotide sequence ID" value="NM_033110.3"/>
</dbReference>
<dbReference type="RefSeq" id="XP_005254140.1">
    <property type="nucleotide sequence ID" value="XM_005254083.2"/>
</dbReference>
<dbReference type="RefSeq" id="XP_011519431.1">
    <property type="nucleotide sequence ID" value="XM_011521129.4"/>
</dbReference>
<dbReference type="RefSeq" id="XP_016876293.1">
    <property type="nucleotide sequence ID" value="XM_017020804.1"/>
</dbReference>
<dbReference type="RefSeq" id="XP_047286664.1">
    <property type="nucleotide sequence ID" value="XM_047430708.1"/>
</dbReference>
<dbReference type="RefSeq" id="XP_054231054.1">
    <property type="nucleotide sequence ID" value="XM_054375079.1"/>
</dbReference>
<dbReference type="RefSeq" id="XP_054231055.1">
    <property type="nucleotide sequence ID" value="XM_054375080.1"/>
</dbReference>
<dbReference type="PDB" id="3JUB">
    <property type="method" value="X-ray"/>
    <property type="resolution" value="1.20 A"/>
    <property type="chains" value="A=1-153"/>
</dbReference>
<dbReference type="PDB" id="3JUC">
    <property type="method" value="X-ray"/>
    <property type="resolution" value="1.20 A"/>
    <property type="chains" value="A=1-153"/>
</dbReference>
<dbReference type="PDB" id="3JUD">
    <property type="method" value="X-ray"/>
    <property type="resolution" value="0.98 A"/>
    <property type="chains" value="A=1-153"/>
</dbReference>
<dbReference type="PDBsum" id="3JUB"/>
<dbReference type="PDBsum" id="3JUC"/>
<dbReference type="PDBsum" id="3JUD"/>
<dbReference type="SMR" id="Q9BVM4"/>
<dbReference type="BioGRID" id="124581">
    <property type="interactions" value="10"/>
</dbReference>
<dbReference type="FunCoup" id="Q9BVM4">
    <property type="interactions" value="148"/>
</dbReference>
<dbReference type="IntAct" id="Q9BVM4">
    <property type="interactions" value="10"/>
</dbReference>
<dbReference type="STRING" id="9606.ENSP00000365426"/>
<dbReference type="DrugBank" id="DB01942">
    <property type="generic name" value="Formic acid"/>
</dbReference>
<dbReference type="GlyGen" id="Q9BVM4">
    <property type="glycosylation" value="1 site"/>
</dbReference>
<dbReference type="BioMuta" id="GGACT"/>
<dbReference type="DMDM" id="74752384"/>
<dbReference type="jPOST" id="Q9BVM4"/>
<dbReference type="MassIVE" id="Q9BVM4"/>
<dbReference type="PaxDb" id="9606-ENSP00000365426"/>
<dbReference type="PeptideAtlas" id="Q9BVM4"/>
<dbReference type="ProteomicsDB" id="79220"/>
<dbReference type="Pumba" id="Q9BVM4"/>
<dbReference type="Antibodypedia" id="57333">
    <property type="antibodies" value="78 antibodies from 16 providers"/>
</dbReference>
<dbReference type="DNASU" id="87769"/>
<dbReference type="Ensembl" id="ENST00000376250.6">
    <property type="protein sequence ID" value="ENSP00000365426.1"/>
    <property type="gene ID" value="ENSG00000134864.11"/>
</dbReference>
<dbReference type="Ensembl" id="ENST00000455100.2">
    <property type="protein sequence ID" value="ENSP00000410449.1"/>
    <property type="gene ID" value="ENSG00000134864.11"/>
</dbReference>
<dbReference type="Ensembl" id="ENST00000683975.1">
    <property type="protein sequence ID" value="ENSP00000508020.1"/>
    <property type="gene ID" value="ENSG00000134864.11"/>
</dbReference>
<dbReference type="GeneID" id="87769"/>
<dbReference type="KEGG" id="hsa:87769"/>
<dbReference type="MANE-Select" id="ENST00000683975.1">
    <property type="protein sequence ID" value="ENSP00000508020.1"/>
    <property type="RefSeq nucleotide sequence ID" value="NM_001195087.2"/>
    <property type="RefSeq protein sequence ID" value="NP_001182016.1"/>
</dbReference>
<dbReference type="UCSC" id="uc001voq.2">
    <property type="organism name" value="human"/>
</dbReference>
<dbReference type="AGR" id="HGNC:25100"/>
<dbReference type="CTD" id="87769"/>
<dbReference type="DisGeNET" id="87769"/>
<dbReference type="GeneCards" id="GGACT"/>
<dbReference type="HGNC" id="HGNC:25100">
    <property type="gene designation" value="GGACT"/>
</dbReference>
<dbReference type="HPA" id="ENSG00000134864">
    <property type="expression patterns" value="Tissue enriched (kidney)"/>
</dbReference>
<dbReference type="MIM" id="613378">
    <property type="type" value="gene"/>
</dbReference>
<dbReference type="neXtProt" id="NX_Q9BVM4"/>
<dbReference type="OpenTargets" id="ENSG00000134864"/>
<dbReference type="PharmGKB" id="PA164714645"/>
<dbReference type="VEuPathDB" id="HostDB:ENSG00000134864"/>
<dbReference type="eggNOG" id="KOG4450">
    <property type="taxonomic scope" value="Eukaryota"/>
</dbReference>
<dbReference type="GeneTree" id="ENSGT00390000010543"/>
<dbReference type="HOGENOM" id="CLU_083466_1_0_1"/>
<dbReference type="InParanoid" id="Q9BVM4"/>
<dbReference type="OMA" id="FENIPTM"/>
<dbReference type="OrthoDB" id="113620at2759"/>
<dbReference type="PAN-GO" id="Q9BVM4">
    <property type="GO annotations" value="1 GO annotation based on evolutionary models"/>
</dbReference>
<dbReference type="PhylomeDB" id="Q9BVM4"/>
<dbReference type="TreeFam" id="TF323258"/>
<dbReference type="BRENDA" id="4.3.2.8">
    <property type="organism ID" value="2681"/>
</dbReference>
<dbReference type="BRENDA" id="4.3.2.9">
    <property type="organism ID" value="2681"/>
</dbReference>
<dbReference type="PathwayCommons" id="Q9BVM4"/>
<dbReference type="SignaLink" id="Q9BVM4"/>
<dbReference type="BioGRID-ORCS" id="87769">
    <property type="hits" value="9 hits in 1144 CRISPR screens"/>
</dbReference>
<dbReference type="ChiTaRS" id="GGACT">
    <property type="organism name" value="human"/>
</dbReference>
<dbReference type="EvolutionaryTrace" id="Q9BVM4"/>
<dbReference type="GenomeRNAi" id="87769"/>
<dbReference type="Pharos" id="Q9BVM4">
    <property type="development level" value="Tbio"/>
</dbReference>
<dbReference type="PRO" id="PR:Q9BVM4"/>
<dbReference type="Proteomes" id="UP000005640">
    <property type="component" value="Chromosome 13"/>
</dbReference>
<dbReference type="RNAct" id="Q9BVM4">
    <property type="molecule type" value="protein"/>
</dbReference>
<dbReference type="Bgee" id="ENSG00000134864">
    <property type="expression patterns" value="Expressed in secondary oocyte and 110 other cell types or tissues"/>
</dbReference>
<dbReference type="ExpressionAtlas" id="Q9BVM4">
    <property type="expression patterns" value="baseline and differential"/>
</dbReference>
<dbReference type="GO" id="GO:0005829">
    <property type="term" value="C:cytosol"/>
    <property type="evidence" value="ECO:0000318"/>
    <property type="project" value="GO_Central"/>
</dbReference>
<dbReference type="GO" id="GO:0070062">
    <property type="term" value="C:extracellular exosome"/>
    <property type="evidence" value="ECO:0007005"/>
    <property type="project" value="UniProtKB"/>
</dbReference>
<dbReference type="GO" id="GO:0061929">
    <property type="term" value="F:gamma-glutamylaminecyclotransferase activity"/>
    <property type="evidence" value="ECO:0000314"/>
    <property type="project" value="UniProtKB"/>
</dbReference>
<dbReference type="GO" id="GO:0042219">
    <property type="term" value="P:modified amino acid catabolic process"/>
    <property type="evidence" value="ECO:0000314"/>
    <property type="project" value="UniProtKB"/>
</dbReference>
<dbReference type="CDD" id="cd06661">
    <property type="entry name" value="GGCT_like"/>
    <property type="match status" value="1"/>
</dbReference>
<dbReference type="FunFam" id="3.10.490.10:FF:000008">
    <property type="entry name" value="Gamma-glutamylaminecyclotransferase A"/>
    <property type="match status" value="1"/>
</dbReference>
<dbReference type="Gene3D" id="3.10.490.10">
    <property type="entry name" value="Gamma-glutamyl cyclotransferase-like"/>
    <property type="match status" value="1"/>
</dbReference>
<dbReference type="InterPro" id="IPR009288">
    <property type="entry name" value="AIG2-like_dom"/>
</dbReference>
<dbReference type="InterPro" id="IPR039126">
    <property type="entry name" value="GGACT"/>
</dbReference>
<dbReference type="InterPro" id="IPR013024">
    <property type="entry name" value="GGCT-like"/>
</dbReference>
<dbReference type="InterPro" id="IPR036568">
    <property type="entry name" value="GGCT-like_sf"/>
</dbReference>
<dbReference type="PANTHER" id="PTHR12510:SF4">
    <property type="entry name" value="GAMMA-GLUTAMYLAMINECYCLOTRANSFERASE"/>
    <property type="match status" value="1"/>
</dbReference>
<dbReference type="PANTHER" id="PTHR12510">
    <property type="entry name" value="TROPONIN C-AKIN-1 PROTEIN"/>
    <property type="match status" value="1"/>
</dbReference>
<dbReference type="Pfam" id="PF06094">
    <property type="entry name" value="GGACT"/>
    <property type="match status" value="1"/>
</dbReference>
<dbReference type="SUPFAM" id="SSF110857">
    <property type="entry name" value="Gamma-glutamyl cyclotransferase-like"/>
    <property type="match status" value="1"/>
</dbReference>
<feature type="chain" id="PRO_0000320203" description="Gamma-glutamylaminecyclotransferase">
    <location>
        <begin position="1"/>
        <end position="153"/>
    </location>
</feature>
<feature type="region of interest" description="Disordered" evidence="1">
    <location>
        <begin position="130"/>
        <end position="153"/>
    </location>
</feature>
<feature type="compositionally biased region" description="Basic and acidic residues" evidence="1">
    <location>
        <begin position="132"/>
        <end position="153"/>
    </location>
</feature>
<feature type="active site" description="Proton acceptor" evidence="2">
    <location>
        <position position="82"/>
    </location>
</feature>
<feature type="binding site">
    <location>
        <begin position="7"/>
        <end position="10"/>
    </location>
    <ligand>
        <name>substrate</name>
    </ligand>
</feature>
<feature type="mutagenesis site" description="Loss of activity." evidence="2">
    <original>E</original>
    <variation>A</variation>
    <variation>Q</variation>
    <location>
        <position position="82"/>
    </location>
</feature>
<feature type="strand" evidence="4">
    <location>
        <begin position="2"/>
        <end position="6"/>
    </location>
</feature>
<feature type="helix" evidence="4">
    <location>
        <begin position="17"/>
        <end position="20"/>
    </location>
</feature>
<feature type="helix" evidence="4">
    <location>
        <begin position="23"/>
        <end position="25"/>
    </location>
</feature>
<feature type="strand" evidence="4">
    <location>
        <begin position="28"/>
        <end position="38"/>
    </location>
</feature>
<feature type="strand" evidence="4">
    <location>
        <begin position="42"/>
        <end position="45"/>
    </location>
</feature>
<feature type="turn" evidence="4">
    <location>
        <begin position="46"/>
        <end position="49"/>
    </location>
</feature>
<feature type="strand" evidence="4">
    <location>
        <begin position="50"/>
        <end position="55"/>
    </location>
</feature>
<feature type="strand" evidence="4">
    <location>
        <begin position="59"/>
        <end position="61"/>
    </location>
</feature>
<feature type="strand" evidence="4">
    <location>
        <begin position="64"/>
        <end position="70"/>
    </location>
</feature>
<feature type="helix" evidence="4">
    <location>
        <begin position="72"/>
        <end position="81"/>
    </location>
</feature>
<feature type="turn" evidence="4">
    <location>
        <begin position="82"/>
        <end position="86"/>
    </location>
</feature>
<feature type="strand" evidence="4">
    <location>
        <begin position="89"/>
        <end position="98"/>
    </location>
</feature>
<feature type="strand" evidence="4">
    <location>
        <begin position="113"/>
        <end position="121"/>
    </location>
</feature>
<feature type="helix" evidence="4">
    <location>
        <begin position="126"/>
        <end position="130"/>
    </location>
</feature>
<evidence type="ECO:0000256" key="1">
    <source>
        <dbReference type="SAM" id="MobiDB-lite"/>
    </source>
</evidence>
<evidence type="ECO:0000269" key="2">
    <source>
    </source>
</evidence>
<evidence type="ECO:0000305" key="3"/>
<evidence type="ECO:0007829" key="4">
    <source>
        <dbReference type="PDB" id="3JUD"/>
    </source>
</evidence>
<keyword id="KW-0002">3D-structure</keyword>
<keyword id="KW-0456">Lyase</keyword>
<keyword id="KW-1267">Proteomics identification</keyword>
<keyword id="KW-1185">Reference proteome</keyword>
<proteinExistence type="evidence at protein level"/>
<name>GGACT_HUMAN</name>